<evidence type="ECO:0000255" key="1">
    <source>
        <dbReference type="HAMAP-Rule" id="MF_00141"/>
    </source>
</evidence>
<feature type="chain" id="PRO_0000094284" description="Elongation factor P">
    <location>
        <begin position="1"/>
        <end position="185"/>
    </location>
</feature>
<keyword id="KW-0963">Cytoplasm</keyword>
<keyword id="KW-0251">Elongation factor</keyword>
<keyword id="KW-0648">Protein biosynthesis</keyword>
<name>EFP_MESH2</name>
<comment type="function">
    <text evidence="1">Involved in peptide bond synthesis. Stimulates efficient translation and peptide-bond synthesis on native or reconstituted 70S ribosomes in vitro. Probably functions indirectly by altering the affinity of the ribosome for aminoacyl-tRNA, thus increasing their reactivity as acceptors for peptidyl transferase.</text>
</comment>
<comment type="pathway">
    <text evidence="1">Protein biosynthesis; polypeptide chain elongation.</text>
</comment>
<comment type="subcellular location">
    <subcellularLocation>
        <location evidence="1">Cytoplasm</location>
    </subcellularLocation>
</comment>
<comment type="similarity">
    <text evidence="1">Belongs to the elongation factor P family.</text>
</comment>
<organism>
    <name type="scientific">Mesomycoplasma hyopneumoniae (strain 232)</name>
    <name type="common">Mycoplasma hyopneumoniae</name>
    <dbReference type="NCBI Taxonomy" id="295358"/>
    <lineage>
        <taxon>Bacteria</taxon>
        <taxon>Bacillati</taxon>
        <taxon>Mycoplasmatota</taxon>
        <taxon>Mycoplasmoidales</taxon>
        <taxon>Metamycoplasmataceae</taxon>
        <taxon>Mesomycoplasma</taxon>
    </lineage>
</organism>
<reference key="1">
    <citation type="journal article" date="2004" name="J. Bacteriol.">
        <title>The genome sequence of Mycoplasma hyopneumoniae strain 232, the agent of swine mycoplasmosis.</title>
        <authorList>
            <person name="Minion F.C."/>
            <person name="Lefkowitz E.J."/>
            <person name="Madsen M.L."/>
            <person name="Cleary B.J."/>
            <person name="Swartzell S.M."/>
            <person name="Mahairas G.G."/>
        </authorList>
    </citation>
    <scope>NUCLEOTIDE SEQUENCE [LARGE SCALE GENOMIC DNA]</scope>
    <source>
        <strain>232</strain>
    </source>
</reference>
<gene>
    <name evidence="1" type="primary">efp</name>
    <name type="ordered locus">mhp430</name>
</gene>
<proteinExistence type="inferred from homology"/>
<dbReference type="EMBL" id="AE017332">
    <property type="protein sequence ID" value="AAV27573.1"/>
    <property type="molecule type" value="Genomic_DNA"/>
</dbReference>
<dbReference type="RefSeq" id="WP_011206264.1">
    <property type="nucleotide sequence ID" value="NC_006360.1"/>
</dbReference>
<dbReference type="SMR" id="Q600M5"/>
<dbReference type="KEGG" id="mhy:mhp430"/>
<dbReference type="eggNOG" id="COG0231">
    <property type="taxonomic scope" value="Bacteria"/>
</dbReference>
<dbReference type="HOGENOM" id="CLU_074944_2_1_14"/>
<dbReference type="PhylomeDB" id="Q600M5"/>
<dbReference type="UniPathway" id="UPA00345"/>
<dbReference type="Proteomes" id="UP000006822">
    <property type="component" value="Chromosome"/>
</dbReference>
<dbReference type="GO" id="GO:0005737">
    <property type="term" value="C:cytoplasm"/>
    <property type="evidence" value="ECO:0007669"/>
    <property type="project" value="UniProtKB-SubCell"/>
</dbReference>
<dbReference type="GO" id="GO:0003746">
    <property type="term" value="F:translation elongation factor activity"/>
    <property type="evidence" value="ECO:0007669"/>
    <property type="project" value="UniProtKB-UniRule"/>
</dbReference>
<dbReference type="GO" id="GO:0043043">
    <property type="term" value="P:peptide biosynthetic process"/>
    <property type="evidence" value="ECO:0007669"/>
    <property type="project" value="InterPro"/>
</dbReference>
<dbReference type="CDD" id="cd04470">
    <property type="entry name" value="S1_EF-P_repeat_1"/>
    <property type="match status" value="1"/>
</dbReference>
<dbReference type="CDD" id="cd05794">
    <property type="entry name" value="S1_EF-P_repeat_2"/>
    <property type="match status" value="1"/>
</dbReference>
<dbReference type="FunFam" id="2.30.30.30:FF:000003">
    <property type="entry name" value="Elongation factor P"/>
    <property type="match status" value="1"/>
</dbReference>
<dbReference type="FunFam" id="2.40.50.140:FF:000004">
    <property type="entry name" value="Elongation factor P"/>
    <property type="match status" value="1"/>
</dbReference>
<dbReference type="FunFam" id="2.40.50.140:FF:000009">
    <property type="entry name" value="Elongation factor P"/>
    <property type="match status" value="1"/>
</dbReference>
<dbReference type="Gene3D" id="2.30.30.30">
    <property type="match status" value="1"/>
</dbReference>
<dbReference type="Gene3D" id="2.40.50.140">
    <property type="entry name" value="Nucleic acid-binding proteins"/>
    <property type="match status" value="2"/>
</dbReference>
<dbReference type="HAMAP" id="MF_00141">
    <property type="entry name" value="EF_P"/>
    <property type="match status" value="1"/>
</dbReference>
<dbReference type="InterPro" id="IPR015365">
    <property type="entry name" value="Elong-fact-P_C"/>
</dbReference>
<dbReference type="InterPro" id="IPR012340">
    <property type="entry name" value="NA-bd_OB-fold"/>
</dbReference>
<dbReference type="InterPro" id="IPR014722">
    <property type="entry name" value="Rib_uL2_dom2"/>
</dbReference>
<dbReference type="InterPro" id="IPR020599">
    <property type="entry name" value="Transl_elong_fac_P/YeiP"/>
</dbReference>
<dbReference type="InterPro" id="IPR013185">
    <property type="entry name" value="Transl_elong_KOW-like"/>
</dbReference>
<dbReference type="InterPro" id="IPR001059">
    <property type="entry name" value="Transl_elong_P/YeiP_cen"/>
</dbReference>
<dbReference type="InterPro" id="IPR013852">
    <property type="entry name" value="Transl_elong_P/YeiP_CS"/>
</dbReference>
<dbReference type="InterPro" id="IPR011768">
    <property type="entry name" value="Transl_elongation_fac_P"/>
</dbReference>
<dbReference type="InterPro" id="IPR008991">
    <property type="entry name" value="Translation_prot_SH3-like_sf"/>
</dbReference>
<dbReference type="NCBIfam" id="TIGR00038">
    <property type="entry name" value="efp"/>
    <property type="match status" value="1"/>
</dbReference>
<dbReference type="NCBIfam" id="NF001810">
    <property type="entry name" value="PRK00529.1"/>
    <property type="match status" value="1"/>
</dbReference>
<dbReference type="PANTHER" id="PTHR30053">
    <property type="entry name" value="ELONGATION FACTOR P"/>
    <property type="match status" value="1"/>
</dbReference>
<dbReference type="PANTHER" id="PTHR30053:SF12">
    <property type="entry name" value="ELONGATION FACTOR P (EF-P) FAMILY PROTEIN"/>
    <property type="match status" value="1"/>
</dbReference>
<dbReference type="Pfam" id="PF01132">
    <property type="entry name" value="EFP"/>
    <property type="match status" value="1"/>
</dbReference>
<dbReference type="Pfam" id="PF08207">
    <property type="entry name" value="EFP_N"/>
    <property type="match status" value="1"/>
</dbReference>
<dbReference type="Pfam" id="PF09285">
    <property type="entry name" value="Elong-fact-P_C"/>
    <property type="match status" value="1"/>
</dbReference>
<dbReference type="PIRSF" id="PIRSF005901">
    <property type="entry name" value="EF-P"/>
    <property type="match status" value="1"/>
</dbReference>
<dbReference type="SMART" id="SM01185">
    <property type="entry name" value="EFP"/>
    <property type="match status" value="1"/>
</dbReference>
<dbReference type="SMART" id="SM00841">
    <property type="entry name" value="Elong-fact-P_C"/>
    <property type="match status" value="1"/>
</dbReference>
<dbReference type="SUPFAM" id="SSF50249">
    <property type="entry name" value="Nucleic acid-binding proteins"/>
    <property type="match status" value="2"/>
</dbReference>
<dbReference type="SUPFAM" id="SSF50104">
    <property type="entry name" value="Translation proteins SH3-like domain"/>
    <property type="match status" value="1"/>
</dbReference>
<dbReference type="PROSITE" id="PS01275">
    <property type="entry name" value="EFP"/>
    <property type="match status" value="1"/>
</dbReference>
<sequence>MINVNEFRPGITFEFENEIYVVISAQHSKQGRGQANVKAKVKNLRTGAITIKTFSGGERVEKAHIEKISMSFLYNDGVSIVLMDDSTYEQVAIENTKITWELNFLTEGIKVKLRKFNNEILDIELPAKIELKITSTFDAVRGNTTTNPTKRATLETGYEIDVPLFIKEGESVIVSTEDGKYVSRA</sequence>
<accession>Q600M5</accession>
<protein>
    <recommendedName>
        <fullName evidence="1">Elongation factor P</fullName>
        <shortName evidence="1">EF-P</shortName>
    </recommendedName>
</protein>